<reference key="1">
    <citation type="journal article" date="1998" name="Science">
        <title>Genome sequence of the nematode C. elegans: a platform for investigating biology.</title>
        <authorList>
            <consortium name="The C. elegans sequencing consortium"/>
        </authorList>
    </citation>
    <scope>NUCLEOTIDE SEQUENCE [LARGE SCALE GENOMIC DNA]</scope>
    <source>
        <strain>Bristol N2</strain>
    </source>
</reference>
<protein>
    <recommendedName>
        <fullName>ATP-dependent RNA helicase SUV3 homolog, mitochondrial</fullName>
        <ecNumber evidence="1">3.6.4.13</ecNumber>
    </recommendedName>
</protein>
<accession>Q17828</accession>
<accession>E9P872</accession>
<accession>Q2XN00</accession>
<proteinExistence type="inferred from homology"/>
<comment type="function">
    <text evidence="1">ATPase and DNA/RNA helicase able to unwind DNA/DNA, DNA/RNA and RNA/RNA duplexes in the 5'-3' direction.</text>
</comment>
<comment type="catalytic activity">
    <reaction evidence="1">
        <text>ATP + H2O = ADP + phosphate + H(+)</text>
        <dbReference type="Rhea" id="RHEA:13065"/>
        <dbReference type="ChEBI" id="CHEBI:15377"/>
        <dbReference type="ChEBI" id="CHEBI:15378"/>
        <dbReference type="ChEBI" id="CHEBI:30616"/>
        <dbReference type="ChEBI" id="CHEBI:43474"/>
        <dbReference type="ChEBI" id="CHEBI:456216"/>
        <dbReference type="EC" id="3.6.4.13"/>
    </reaction>
</comment>
<comment type="cofactor">
    <cofactor evidence="1">
        <name>Mg(2+)</name>
        <dbReference type="ChEBI" id="CHEBI:18420"/>
    </cofactor>
    <cofactor evidence="1">
        <name>Mn(2+)</name>
        <dbReference type="ChEBI" id="CHEBI:29035"/>
    </cofactor>
</comment>
<comment type="subcellular location">
    <subcellularLocation>
        <location evidence="1">Mitochondrion matrix</location>
    </subcellularLocation>
    <subcellularLocation>
        <location evidence="1">Nucleus</location>
    </subcellularLocation>
</comment>
<comment type="alternative products">
    <event type="alternative splicing"/>
    <isoform>
        <id>Q17828-1</id>
        <name evidence="7">b</name>
        <sequence type="displayed"/>
    </isoform>
    <isoform>
        <id>Q17828-2</id>
        <name evidence="8">c</name>
        <sequence type="described" ref="VSP_060781"/>
    </isoform>
</comment>
<comment type="similarity">
    <text evidence="6">Belongs to the helicase family.</text>
</comment>
<sequence length="719" mass="81010">MRRASGVLRVLGGLTQRCSTSSTPSSSRFPAMNSRRKRNSVRKTATIEDIVEPRKVKHVTQTAAGMGEWIGSLDNTNIHMSLDEFMRRPMVRQLAKENGINDKLFMRSFKSFREYCTPEDLNSVDPGLLILLSDISKGTKDCEMLYPFFLDHAKQVFPHLEAMDDLRIISDLTRPHNWYPEARSVTRKIFFHAGPTNSGKTYHALKRFGEAKSAVFCGPLKLLAAEVFHRTNELGIPCDLVTGEERRFAKDNHHPSQHLSSTVEMLSTQMRVEVAVIDEIQMLRDEQRGWAWTRALLGAAADEIHLCGEPAAIDIVKKLLEPIGETVEVRYYERKSPLAIADKAIESYSNIEPGDCIVCFSKRSIFFNSKKLEENGIKPAVIYGDLPPGTKLAQAAKFNDPDDECNVLVATDAIGMGLNLNIRRVIFNSCTRQTELLPTYAALQIAGRAGRFGTAYANGVATTMRKEDLGTLKAILSEKIEPIANVGIAPTYDQIETFSFHLPQASFVRLLDLFVSVCSVSDHFFICTVYDMRELAVLIDQIPLPLKVRYTFCTSPLNTEDKRTSAVFVKMARRFSTGQALTYEWLIDMLEWPPKPATTLNELSLLEQNYEILDQYMWLSMRFPDMLPDEPRVREASKHLDSMIQEGVESFMSLLSVGATESKAAGSSKSSEGKRENPSKSEREKPNKRSSILEALLKRADISEDDLEQLREELNKNKK</sequence>
<organism>
    <name type="scientific">Caenorhabditis elegans</name>
    <dbReference type="NCBI Taxonomy" id="6239"/>
    <lineage>
        <taxon>Eukaryota</taxon>
        <taxon>Metazoa</taxon>
        <taxon>Ecdysozoa</taxon>
        <taxon>Nematoda</taxon>
        <taxon>Chromadorea</taxon>
        <taxon>Rhabditida</taxon>
        <taxon>Rhabditina</taxon>
        <taxon>Rhabditomorpha</taxon>
        <taxon>Rhabditoidea</taxon>
        <taxon>Rhabditidae</taxon>
        <taxon>Peloderinae</taxon>
        <taxon>Caenorhabditis</taxon>
    </lineage>
</organism>
<feature type="transit peptide" description="Mitochondrion" evidence="2">
    <location>
        <begin position="1"/>
        <end position="18"/>
    </location>
</feature>
<feature type="chain" id="PRO_0000310551" description="ATP-dependent RNA helicase SUV3 homolog, mitochondrial">
    <location>
        <begin position="19"/>
        <end position="719"/>
    </location>
</feature>
<feature type="domain" description="Helicase ATP-binding" evidence="3">
    <location>
        <begin position="181"/>
        <end position="319"/>
    </location>
</feature>
<feature type="domain" description="Helicase C-terminal" evidence="4">
    <location>
        <begin position="343"/>
        <end position="499"/>
    </location>
</feature>
<feature type="region of interest" description="Disordered" evidence="5">
    <location>
        <begin position="16"/>
        <end position="42"/>
    </location>
</feature>
<feature type="region of interest" description="Disordered" evidence="5">
    <location>
        <begin position="662"/>
        <end position="692"/>
    </location>
</feature>
<feature type="coiled-coil region" evidence="2">
    <location>
        <begin position="693"/>
        <end position="717"/>
    </location>
</feature>
<feature type="compositionally biased region" description="Basic and acidic residues" evidence="5">
    <location>
        <begin position="671"/>
        <end position="687"/>
    </location>
</feature>
<feature type="binding site" evidence="3">
    <location>
        <begin position="194"/>
        <end position="201"/>
    </location>
    <ligand>
        <name>ATP</name>
        <dbReference type="ChEBI" id="CHEBI:30616"/>
    </ligand>
</feature>
<feature type="splice variant" id="VSP_060781" description="In isoform c." evidence="6">
    <location>
        <begin position="1"/>
        <end position="281"/>
    </location>
</feature>
<evidence type="ECO:0000250" key="1">
    <source>
        <dbReference type="UniProtKB" id="Q8IYB8"/>
    </source>
</evidence>
<evidence type="ECO:0000255" key="2"/>
<evidence type="ECO:0000255" key="3">
    <source>
        <dbReference type="PROSITE-ProRule" id="PRU00541"/>
    </source>
</evidence>
<evidence type="ECO:0000255" key="4">
    <source>
        <dbReference type="PROSITE-ProRule" id="PRU00542"/>
    </source>
</evidence>
<evidence type="ECO:0000256" key="5">
    <source>
        <dbReference type="SAM" id="MobiDB-lite"/>
    </source>
</evidence>
<evidence type="ECO:0000305" key="6"/>
<evidence type="ECO:0000312" key="7">
    <source>
        <dbReference type="WormBase" id="C08F8.2b"/>
    </source>
</evidence>
<evidence type="ECO:0000312" key="8">
    <source>
        <dbReference type="WormBase" id="C08F8.2c"/>
    </source>
</evidence>
<dbReference type="EC" id="3.6.4.13" evidence="1"/>
<dbReference type="EMBL" id="BX284604">
    <property type="protein sequence ID" value="CAJ43433.1"/>
    <property type="molecule type" value="Genomic_DNA"/>
</dbReference>
<dbReference type="EMBL" id="BX284604">
    <property type="protein sequence ID" value="CBZ01775.1"/>
    <property type="molecule type" value="Genomic_DNA"/>
</dbReference>
<dbReference type="PIR" id="T19103">
    <property type="entry name" value="T19103"/>
</dbReference>
<dbReference type="RefSeq" id="NP_001040912.1">
    <molecule id="Q17828-1"/>
    <property type="nucleotide sequence ID" value="NM_001047447.5"/>
</dbReference>
<dbReference type="RefSeq" id="NP_001255542.1">
    <molecule id="Q17828-2"/>
    <property type="nucleotide sequence ID" value="NM_001268613.3"/>
</dbReference>
<dbReference type="SMR" id="Q17828"/>
<dbReference type="BioGRID" id="43121">
    <property type="interactions" value="1"/>
</dbReference>
<dbReference type="FunCoup" id="Q17828">
    <property type="interactions" value="2512"/>
</dbReference>
<dbReference type="IntAct" id="Q17828">
    <property type="interactions" value="1"/>
</dbReference>
<dbReference type="STRING" id="6239.C08F8.2b.2"/>
<dbReference type="PaxDb" id="6239-C08F8.2a"/>
<dbReference type="PeptideAtlas" id="Q17828"/>
<dbReference type="EnsemblMetazoa" id="C08F8.2b.1">
    <molecule id="Q17828-1"/>
    <property type="protein sequence ID" value="C08F8.2b.1"/>
    <property type="gene ID" value="WBGene00007444"/>
</dbReference>
<dbReference type="EnsemblMetazoa" id="C08F8.2c.1">
    <molecule id="Q17828-2"/>
    <property type="protein sequence ID" value="C08F8.2c.1"/>
    <property type="gene ID" value="WBGene00007444"/>
</dbReference>
<dbReference type="GeneID" id="178022"/>
<dbReference type="KEGG" id="cel:CELE_C08F8.2"/>
<dbReference type="UCSC" id="C08F8.2a">
    <molecule id="Q17828-1"/>
    <property type="organism name" value="c. elegans"/>
</dbReference>
<dbReference type="AGR" id="WB:WBGene00007444"/>
<dbReference type="CTD" id="178022"/>
<dbReference type="WormBase" id="C08F8.2b">
    <molecule id="Q17828-1"/>
    <property type="protein sequence ID" value="CE05249"/>
    <property type="gene ID" value="WBGene00007444"/>
</dbReference>
<dbReference type="WormBase" id="C08F8.2c">
    <molecule id="Q17828-2"/>
    <property type="protein sequence ID" value="CE45714"/>
    <property type="gene ID" value="WBGene00007444"/>
</dbReference>
<dbReference type="eggNOG" id="KOG0953">
    <property type="taxonomic scope" value="Eukaryota"/>
</dbReference>
<dbReference type="GeneTree" id="ENSGT00390000003100"/>
<dbReference type="HOGENOM" id="CLU_010647_3_2_1"/>
<dbReference type="InParanoid" id="Q17828"/>
<dbReference type="OrthoDB" id="6692397at2759"/>
<dbReference type="PhylomeDB" id="Q17828"/>
<dbReference type="PRO" id="PR:Q17828"/>
<dbReference type="Proteomes" id="UP000001940">
    <property type="component" value="Chromosome IV"/>
</dbReference>
<dbReference type="Bgee" id="WBGene00007444">
    <property type="expression patterns" value="Expressed in germ line (C elegans) and 4 other cell types or tissues"/>
</dbReference>
<dbReference type="ExpressionAtlas" id="Q17828">
    <property type="expression patterns" value="baseline and differential"/>
</dbReference>
<dbReference type="GO" id="GO:0045025">
    <property type="term" value="C:mitochondrial degradosome"/>
    <property type="evidence" value="ECO:0000318"/>
    <property type="project" value="GO_Central"/>
</dbReference>
<dbReference type="GO" id="GO:0005759">
    <property type="term" value="C:mitochondrial matrix"/>
    <property type="evidence" value="ECO:0000250"/>
    <property type="project" value="UniProtKB"/>
</dbReference>
<dbReference type="GO" id="GO:0005634">
    <property type="term" value="C:nucleus"/>
    <property type="evidence" value="ECO:0007669"/>
    <property type="project" value="UniProtKB-SubCell"/>
</dbReference>
<dbReference type="GO" id="GO:0005524">
    <property type="term" value="F:ATP binding"/>
    <property type="evidence" value="ECO:0007669"/>
    <property type="project" value="UniProtKB-KW"/>
</dbReference>
<dbReference type="GO" id="GO:0016887">
    <property type="term" value="F:ATP hydrolysis activity"/>
    <property type="evidence" value="ECO:0007669"/>
    <property type="project" value="RHEA"/>
</dbReference>
<dbReference type="GO" id="GO:0003677">
    <property type="term" value="F:DNA binding"/>
    <property type="evidence" value="ECO:0000250"/>
    <property type="project" value="UniProtKB"/>
</dbReference>
<dbReference type="GO" id="GO:0003678">
    <property type="term" value="F:DNA helicase activity"/>
    <property type="evidence" value="ECO:0000250"/>
    <property type="project" value="UniProtKB"/>
</dbReference>
<dbReference type="GO" id="GO:0003724">
    <property type="term" value="F:RNA helicase activity"/>
    <property type="evidence" value="ECO:0007669"/>
    <property type="project" value="UniProtKB-EC"/>
</dbReference>
<dbReference type="GO" id="GO:0000965">
    <property type="term" value="P:mitochondrial RNA 3'-end processing"/>
    <property type="evidence" value="ECO:0000318"/>
    <property type="project" value="GO_Central"/>
</dbReference>
<dbReference type="CDD" id="cd17913">
    <property type="entry name" value="DEXQc_Suv3"/>
    <property type="match status" value="1"/>
</dbReference>
<dbReference type="CDD" id="cd18805">
    <property type="entry name" value="SF2_C_suv3"/>
    <property type="match status" value="1"/>
</dbReference>
<dbReference type="FunFam" id="1.20.58.1080:FF:000001">
    <property type="entry name" value="ATP-dependent RNA helicase SUPV3L1, mitochondrial"/>
    <property type="match status" value="1"/>
</dbReference>
<dbReference type="FunFam" id="3.40.50.300:FF:000269">
    <property type="entry name" value="ATP-dependent RNA helicase SUPV3L1, mitochondrial"/>
    <property type="match status" value="1"/>
</dbReference>
<dbReference type="FunFam" id="3.40.50.300:FF:000446">
    <property type="entry name" value="ATP-dependent RNA helicase SUPV3L1, mitochondrial"/>
    <property type="match status" value="1"/>
</dbReference>
<dbReference type="FunFam" id="1.10.1740.140:FF:000002">
    <property type="entry name" value="ATP-dependent RNA helicase SUV3 homolog, mitochondrial"/>
    <property type="match status" value="1"/>
</dbReference>
<dbReference type="Gene3D" id="1.10.1740.140">
    <property type="match status" value="1"/>
</dbReference>
<dbReference type="Gene3D" id="1.20.272.40">
    <property type="match status" value="1"/>
</dbReference>
<dbReference type="Gene3D" id="1.20.58.1080">
    <property type="match status" value="1"/>
</dbReference>
<dbReference type="Gene3D" id="3.40.50.300">
    <property type="entry name" value="P-loop containing nucleotide triphosphate hydrolases"/>
    <property type="match status" value="2"/>
</dbReference>
<dbReference type="InterPro" id="IPR055206">
    <property type="entry name" value="DEXQc_SUV3"/>
</dbReference>
<dbReference type="InterPro" id="IPR014001">
    <property type="entry name" value="Helicase_ATP-bd"/>
</dbReference>
<dbReference type="InterPro" id="IPR001650">
    <property type="entry name" value="Helicase_C-like"/>
</dbReference>
<dbReference type="InterPro" id="IPR027417">
    <property type="entry name" value="P-loop_NTPase"/>
</dbReference>
<dbReference type="InterPro" id="IPR050699">
    <property type="entry name" value="RNA-DNA_Helicase"/>
</dbReference>
<dbReference type="InterPro" id="IPR022192">
    <property type="entry name" value="SUV3_C"/>
</dbReference>
<dbReference type="InterPro" id="IPR041082">
    <property type="entry name" value="Suv3_C_1"/>
</dbReference>
<dbReference type="InterPro" id="IPR044774">
    <property type="entry name" value="Suv3_DEXQc"/>
</dbReference>
<dbReference type="InterPro" id="IPR041453">
    <property type="entry name" value="Suv3_N"/>
</dbReference>
<dbReference type="PANTHER" id="PTHR12131">
    <property type="entry name" value="ATP-DEPENDENT RNA AND DNA HELICASE"/>
    <property type="match status" value="1"/>
</dbReference>
<dbReference type="PANTHER" id="PTHR12131:SF1">
    <property type="entry name" value="ATP-DEPENDENT RNA HELICASE SUPV3L1, MITOCHONDRIAL-RELATED"/>
    <property type="match status" value="1"/>
</dbReference>
<dbReference type="Pfam" id="PF22527">
    <property type="entry name" value="DEXQc_Suv3"/>
    <property type="match status" value="1"/>
</dbReference>
<dbReference type="Pfam" id="PF00271">
    <property type="entry name" value="Helicase_C"/>
    <property type="match status" value="1"/>
</dbReference>
<dbReference type="Pfam" id="PF12513">
    <property type="entry name" value="SUV3_C"/>
    <property type="match status" value="1"/>
</dbReference>
<dbReference type="Pfam" id="PF18147">
    <property type="entry name" value="Suv3_C_1"/>
    <property type="match status" value="1"/>
</dbReference>
<dbReference type="Pfam" id="PF18114">
    <property type="entry name" value="Suv3_N"/>
    <property type="match status" value="1"/>
</dbReference>
<dbReference type="SMART" id="SM00487">
    <property type="entry name" value="DEXDc"/>
    <property type="match status" value="1"/>
</dbReference>
<dbReference type="SMART" id="SM00490">
    <property type="entry name" value="HELICc"/>
    <property type="match status" value="1"/>
</dbReference>
<dbReference type="SUPFAM" id="SSF52540">
    <property type="entry name" value="P-loop containing nucleoside triphosphate hydrolases"/>
    <property type="match status" value="2"/>
</dbReference>
<dbReference type="PROSITE" id="PS51192">
    <property type="entry name" value="HELICASE_ATP_BIND_1"/>
    <property type="match status" value="1"/>
</dbReference>
<dbReference type="PROSITE" id="PS51194">
    <property type="entry name" value="HELICASE_CTER"/>
    <property type="match status" value="1"/>
</dbReference>
<name>SUV3_CAEEL</name>
<gene>
    <name evidence="7" type="ORF">C08F8.2</name>
</gene>
<keyword id="KW-0025">Alternative splicing</keyword>
<keyword id="KW-0067">ATP-binding</keyword>
<keyword id="KW-0175">Coiled coil</keyword>
<keyword id="KW-0347">Helicase</keyword>
<keyword id="KW-0378">Hydrolase</keyword>
<keyword id="KW-0496">Mitochondrion</keyword>
<keyword id="KW-0547">Nucleotide-binding</keyword>
<keyword id="KW-0539">Nucleus</keyword>
<keyword id="KW-1185">Reference proteome</keyword>
<keyword id="KW-0809">Transit peptide</keyword>